<gene>
    <name evidence="1" type="primary">purM</name>
    <name type="ordered locus">Bcen2424_0761</name>
</gene>
<proteinExistence type="inferred from homology"/>
<sequence>MNPPKSAPDAQGLSYRDAGVDIDAGDALIDKIKPFAKKTLRDGVLGGIGGFGALFEVPKKYKEPVLVSGTDGVGTKLKLAFHLNKHDTVGQDLVAMSVNDILVQGAEPLFFLDYFACGKLDVDTAATVVKGIAQGCELSGCALIGGETAEMPGMYPDGEYDLAGFAVGAVEKSKIIDGSTIAEGDVVLGLASSGIHSNGFSLVRKIIERANPDLSADFHGRSLADALMAPTRIYVKPLLALMQKLSVKGMAHITGGGLVENIPRVLRDGLTAELDQNAWPLPPLFKWLQEHGGVADAEMHRVFNCGIGMAVIVSAADADAAIADLTAAGEQVWKIGTVRATREGEAQTVVV</sequence>
<name>PUR5_BURCH</name>
<comment type="catalytic activity">
    <reaction evidence="1">
        <text>2-formamido-N(1)-(5-O-phospho-beta-D-ribosyl)acetamidine + ATP = 5-amino-1-(5-phospho-beta-D-ribosyl)imidazole + ADP + phosphate + H(+)</text>
        <dbReference type="Rhea" id="RHEA:23032"/>
        <dbReference type="ChEBI" id="CHEBI:15378"/>
        <dbReference type="ChEBI" id="CHEBI:30616"/>
        <dbReference type="ChEBI" id="CHEBI:43474"/>
        <dbReference type="ChEBI" id="CHEBI:137981"/>
        <dbReference type="ChEBI" id="CHEBI:147287"/>
        <dbReference type="ChEBI" id="CHEBI:456216"/>
        <dbReference type="EC" id="6.3.3.1"/>
    </reaction>
</comment>
<comment type="pathway">
    <text evidence="1">Purine metabolism; IMP biosynthesis via de novo pathway; 5-amino-1-(5-phospho-D-ribosyl)imidazole from N(2)-formyl-N(1)-(5-phospho-D-ribosyl)glycinamide: step 2/2.</text>
</comment>
<comment type="subcellular location">
    <subcellularLocation>
        <location evidence="1">Cytoplasm</location>
    </subcellularLocation>
</comment>
<comment type="similarity">
    <text evidence="1">Belongs to the AIR synthase family.</text>
</comment>
<organism>
    <name type="scientific">Burkholderia cenocepacia (strain HI2424)</name>
    <dbReference type="NCBI Taxonomy" id="331272"/>
    <lineage>
        <taxon>Bacteria</taxon>
        <taxon>Pseudomonadati</taxon>
        <taxon>Pseudomonadota</taxon>
        <taxon>Betaproteobacteria</taxon>
        <taxon>Burkholderiales</taxon>
        <taxon>Burkholderiaceae</taxon>
        <taxon>Burkholderia</taxon>
        <taxon>Burkholderia cepacia complex</taxon>
    </lineage>
</organism>
<feature type="chain" id="PRO_1000046424" description="Phosphoribosylformylglycinamidine cyclo-ligase">
    <location>
        <begin position="1"/>
        <end position="351"/>
    </location>
</feature>
<reference key="1">
    <citation type="submission" date="2006-08" db="EMBL/GenBank/DDBJ databases">
        <title>Complete sequence of chromosome 1 of Burkholderia cenocepacia HI2424.</title>
        <authorList>
            <person name="Copeland A."/>
            <person name="Lucas S."/>
            <person name="Lapidus A."/>
            <person name="Barry K."/>
            <person name="Detter J.C."/>
            <person name="Glavina del Rio T."/>
            <person name="Hammon N."/>
            <person name="Israni S."/>
            <person name="Pitluck S."/>
            <person name="Chain P."/>
            <person name="Malfatti S."/>
            <person name="Shin M."/>
            <person name="Vergez L."/>
            <person name="Schmutz J."/>
            <person name="Larimer F."/>
            <person name="Land M."/>
            <person name="Hauser L."/>
            <person name="Kyrpides N."/>
            <person name="Kim E."/>
            <person name="LiPuma J.J."/>
            <person name="Gonzalez C.F."/>
            <person name="Konstantinidis K."/>
            <person name="Tiedje J.M."/>
            <person name="Richardson P."/>
        </authorList>
    </citation>
    <scope>NUCLEOTIDE SEQUENCE [LARGE SCALE GENOMIC DNA]</scope>
    <source>
        <strain>HI2424</strain>
    </source>
</reference>
<accession>A0K4T7</accession>
<evidence type="ECO:0000255" key="1">
    <source>
        <dbReference type="HAMAP-Rule" id="MF_00741"/>
    </source>
</evidence>
<keyword id="KW-0067">ATP-binding</keyword>
<keyword id="KW-0963">Cytoplasm</keyword>
<keyword id="KW-0436">Ligase</keyword>
<keyword id="KW-0547">Nucleotide-binding</keyword>
<keyword id="KW-0658">Purine biosynthesis</keyword>
<dbReference type="EC" id="6.3.3.1" evidence="1"/>
<dbReference type="EMBL" id="CP000458">
    <property type="protein sequence ID" value="ABK07514.1"/>
    <property type="molecule type" value="Genomic_DNA"/>
</dbReference>
<dbReference type="RefSeq" id="WP_006476828.1">
    <property type="nucleotide sequence ID" value="NC_008542.1"/>
</dbReference>
<dbReference type="SMR" id="A0K4T7"/>
<dbReference type="GeneID" id="83047528"/>
<dbReference type="KEGG" id="bch:Bcen2424_0761"/>
<dbReference type="HOGENOM" id="CLU_047116_0_0_4"/>
<dbReference type="UniPathway" id="UPA00074">
    <property type="reaction ID" value="UER00129"/>
</dbReference>
<dbReference type="GO" id="GO:0005829">
    <property type="term" value="C:cytosol"/>
    <property type="evidence" value="ECO:0007669"/>
    <property type="project" value="TreeGrafter"/>
</dbReference>
<dbReference type="GO" id="GO:0005524">
    <property type="term" value="F:ATP binding"/>
    <property type="evidence" value="ECO:0007669"/>
    <property type="project" value="UniProtKB-KW"/>
</dbReference>
<dbReference type="GO" id="GO:0004637">
    <property type="term" value="F:phosphoribosylamine-glycine ligase activity"/>
    <property type="evidence" value="ECO:0007669"/>
    <property type="project" value="TreeGrafter"/>
</dbReference>
<dbReference type="GO" id="GO:0004641">
    <property type="term" value="F:phosphoribosylformylglycinamidine cyclo-ligase activity"/>
    <property type="evidence" value="ECO:0007669"/>
    <property type="project" value="UniProtKB-UniRule"/>
</dbReference>
<dbReference type="GO" id="GO:0006189">
    <property type="term" value="P:'de novo' IMP biosynthetic process"/>
    <property type="evidence" value="ECO:0007669"/>
    <property type="project" value="UniProtKB-UniRule"/>
</dbReference>
<dbReference type="GO" id="GO:0046084">
    <property type="term" value="P:adenine biosynthetic process"/>
    <property type="evidence" value="ECO:0007669"/>
    <property type="project" value="TreeGrafter"/>
</dbReference>
<dbReference type="CDD" id="cd02196">
    <property type="entry name" value="PurM"/>
    <property type="match status" value="1"/>
</dbReference>
<dbReference type="FunFam" id="3.30.1330.10:FF:000001">
    <property type="entry name" value="Phosphoribosylformylglycinamidine cyclo-ligase"/>
    <property type="match status" value="1"/>
</dbReference>
<dbReference type="FunFam" id="3.90.650.10:FF:000001">
    <property type="entry name" value="Phosphoribosylformylglycinamidine cyclo-ligase"/>
    <property type="match status" value="1"/>
</dbReference>
<dbReference type="Gene3D" id="3.90.650.10">
    <property type="entry name" value="PurM-like C-terminal domain"/>
    <property type="match status" value="1"/>
</dbReference>
<dbReference type="Gene3D" id="3.30.1330.10">
    <property type="entry name" value="PurM-like, N-terminal domain"/>
    <property type="match status" value="1"/>
</dbReference>
<dbReference type="HAMAP" id="MF_00741">
    <property type="entry name" value="AIRS"/>
    <property type="match status" value="1"/>
</dbReference>
<dbReference type="InterPro" id="IPR010918">
    <property type="entry name" value="PurM-like_C_dom"/>
</dbReference>
<dbReference type="InterPro" id="IPR036676">
    <property type="entry name" value="PurM-like_C_sf"/>
</dbReference>
<dbReference type="InterPro" id="IPR016188">
    <property type="entry name" value="PurM-like_N"/>
</dbReference>
<dbReference type="InterPro" id="IPR036921">
    <property type="entry name" value="PurM-like_N_sf"/>
</dbReference>
<dbReference type="InterPro" id="IPR004733">
    <property type="entry name" value="PurM_cligase"/>
</dbReference>
<dbReference type="NCBIfam" id="TIGR00878">
    <property type="entry name" value="purM"/>
    <property type="match status" value="1"/>
</dbReference>
<dbReference type="PANTHER" id="PTHR10520:SF12">
    <property type="entry name" value="TRIFUNCTIONAL PURINE BIOSYNTHETIC PROTEIN ADENOSINE-3"/>
    <property type="match status" value="1"/>
</dbReference>
<dbReference type="PANTHER" id="PTHR10520">
    <property type="entry name" value="TRIFUNCTIONAL PURINE BIOSYNTHETIC PROTEIN ADENOSINE-3-RELATED"/>
    <property type="match status" value="1"/>
</dbReference>
<dbReference type="Pfam" id="PF00586">
    <property type="entry name" value="AIRS"/>
    <property type="match status" value="1"/>
</dbReference>
<dbReference type="Pfam" id="PF02769">
    <property type="entry name" value="AIRS_C"/>
    <property type="match status" value="1"/>
</dbReference>
<dbReference type="SUPFAM" id="SSF56042">
    <property type="entry name" value="PurM C-terminal domain-like"/>
    <property type="match status" value="1"/>
</dbReference>
<dbReference type="SUPFAM" id="SSF55326">
    <property type="entry name" value="PurM N-terminal domain-like"/>
    <property type="match status" value="1"/>
</dbReference>
<protein>
    <recommendedName>
        <fullName evidence="1">Phosphoribosylformylglycinamidine cyclo-ligase</fullName>
        <ecNumber evidence="1">6.3.3.1</ecNumber>
    </recommendedName>
    <alternativeName>
        <fullName evidence="1">AIR synthase</fullName>
    </alternativeName>
    <alternativeName>
        <fullName evidence="1">AIRS</fullName>
    </alternativeName>
    <alternativeName>
        <fullName evidence="1">Phosphoribosyl-aminoimidazole synthetase</fullName>
    </alternativeName>
</protein>